<organism>
    <name type="scientific">Bacillus cereus (strain ATCC 14579 / DSM 31 / CCUG 7414 / JCM 2152 / NBRC 15305 / NCIMB 9373 / NCTC 2599 / NRRL B-3711)</name>
    <dbReference type="NCBI Taxonomy" id="226900"/>
    <lineage>
        <taxon>Bacteria</taxon>
        <taxon>Bacillati</taxon>
        <taxon>Bacillota</taxon>
        <taxon>Bacilli</taxon>
        <taxon>Bacillales</taxon>
        <taxon>Bacillaceae</taxon>
        <taxon>Bacillus</taxon>
        <taxon>Bacillus cereus group</taxon>
    </lineage>
</organism>
<gene>
    <name evidence="1" type="primary">rnhB</name>
    <name type="ordered locus">BC_3835</name>
</gene>
<evidence type="ECO:0000255" key="1">
    <source>
        <dbReference type="HAMAP-Rule" id="MF_00052"/>
    </source>
</evidence>
<evidence type="ECO:0000255" key="2">
    <source>
        <dbReference type="PROSITE-ProRule" id="PRU01319"/>
    </source>
</evidence>
<keyword id="KW-0963">Cytoplasm</keyword>
<keyword id="KW-0255">Endonuclease</keyword>
<keyword id="KW-0378">Hydrolase</keyword>
<keyword id="KW-0464">Manganese</keyword>
<keyword id="KW-0479">Metal-binding</keyword>
<keyword id="KW-0540">Nuclease</keyword>
<keyword id="KW-1185">Reference proteome</keyword>
<dbReference type="EC" id="3.1.26.4" evidence="1"/>
<dbReference type="EMBL" id="AE016877">
    <property type="protein sequence ID" value="AAP10757.1"/>
    <property type="molecule type" value="Genomic_DNA"/>
</dbReference>
<dbReference type="RefSeq" id="NP_833556.1">
    <property type="nucleotide sequence ID" value="NC_004722.1"/>
</dbReference>
<dbReference type="RefSeq" id="WP_001194268.1">
    <property type="nucleotide sequence ID" value="NC_004722.1"/>
</dbReference>
<dbReference type="SMR" id="Q819W9"/>
<dbReference type="STRING" id="226900.BC_3835"/>
<dbReference type="KEGG" id="bce:BC3835"/>
<dbReference type="PATRIC" id="fig|226900.8.peg.3954"/>
<dbReference type="HOGENOM" id="CLU_036532_2_1_9"/>
<dbReference type="OrthoDB" id="9803420at2"/>
<dbReference type="Proteomes" id="UP000001417">
    <property type="component" value="Chromosome"/>
</dbReference>
<dbReference type="GO" id="GO:0005737">
    <property type="term" value="C:cytoplasm"/>
    <property type="evidence" value="ECO:0007669"/>
    <property type="project" value="UniProtKB-SubCell"/>
</dbReference>
<dbReference type="GO" id="GO:0032299">
    <property type="term" value="C:ribonuclease H2 complex"/>
    <property type="evidence" value="ECO:0000318"/>
    <property type="project" value="GO_Central"/>
</dbReference>
<dbReference type="GO" id="GO:0030145">
    <property type="term" value="F:manganese ion binding"/>
    <property type="evidence" value="ECO:0007669"/>
    <property type="project" value="UniProtKB-UniRule"/>
</dbReference>
<dbReference type="GO" id="GO:0003723">
    <property type="term" value="F:RNA binding"/>
    <property type="evidence" value="ECO:0007669"/>
    <property type="project" value="InterPro"/>
</dbReference>
<dbReference type="GO" id="GO:0004523">
    <property type="term" value="F:RNA-DNA hybrid ribonuclease activity"/>
    <property type="evidence" value="ECO:0000318"/>
    <property type="project" value="GO_Central"/>
</dbReference>
<dbReference type="GO" id="GO:0043137">
    <property type="term" value="P:DNA replication, removal of RNA primer"/>
    <property type="evidence" value="ECO:0000318"/>
    <property type="project" value="GO_Central"/>
</dbReference>
<dbReference type="GO" id="GO:0006298">
    <property type="term" value="P:mismatch repair"/>
    <property type="evidence" value="ECO:0000318"/>
    <property type="project" value="GO_Central"/>
</dbReference>
<dbReference type="CDD" id="cd07182">
    <property type="entry name" value="RNase_HII_bacteria_HII_like"/>
    <property type="match status" value="1"/>
</dbReference>
<dbReference type="FunFam" id="3.30.420.10:FF:000006">
    <property type="entry name" value="Ribonuclease HII"/>
    <property type="match status" value="1"/>
</dbReference>
<dbReference type="Gene3D" id="3.30.420.10">
    <property type="entry name" value="Ribonuclease H-like superfamily/Ribonuclease H"/>
    <property type="match status" value="1"/>
</dbReference>
<dbReference type="HAMAP" id="MF_00052_B">
    <property type="entry name" value="RNase_HII_B"/>
    <property type="match status" value="1"/>
</dbReference>
<dbReference type="InterPro" id="IPR022898">
    <property type="entry name" value="RNase_HII"/>
</dbReference>
<dbReference type="InterPro" id="IPR001352">
    <property type="entry name" value="RNase_HII/HIII"/>
</dbReference>
<dbReference type="InterPro" id="IPR024567">
    <property type="entry name" value="RNase_HII/HIII_dom"/>
</dbReference>
<dbReference type="InterPro" id="IPR012337">
    <property type="entry name" value="RNaseH-like_sf"/>
</dbReference>
<dbReference type="InterPro" id="IPR036397">
    <property type="entry name" value="RNaseH_sf"/>
</dbReference>
<dbReference type="NCBIfam" id="NF000594">
    <property type="entry name" value="PRK00015.1-1"/>
    <property type="match status" value="1"/>
</dbReference>
<dbReference type="NCBIfam" id="NF000595">
    <property type="entry name" value="PRK00015.1-3"/>
    <property type="match status" value="1"/>
</dbReference>
<dbReference type="PANTHER" id="PTHR10954">
    <property type="entry name" value="RIBONUCLEASE H2 SUBUNIT A"/>
    <property type="match status" value="1"/>
</dbReference>
<dbReference type="PANTHER" id="PTHR10954:SF18">
    <property type="entry name" value="RIBONUCLEASE HII"/>
    <property type="match status" value="1"/>
</dbReference>
<dbReference type="Pfam" id="PF01351">
    <property type="entry name" value="RNase_HII"/>
    <property type="match status" value="1"/>
</dbReference>
<dbReference type="SUPFAM" id="SSF53098">
    <property type="entry name" value="Ribonuclease H-like"/>
    <property type="match status" value="1"/>
</dbReference>
<dbReference type="PROSITE" id="PS51975">
    <property type="entry name" value="RNASE_H_2"/>
    <property type="match status" value="1"/>
</dbReference>
<reference key="1">
    <citation type="journal article" date="2003" name="Nature">
        <title>Genome sequence of Bacillus cereus and comparative analysis with Bacillus anthracis.</title>
        <authorList>
            <person name="Ivanova N."/>
            <person name="Sorokin A."/>
            <person name="Anderson I."/>
            <person name="Galleron N."/>
            <person name="Candelon B."/>
            <person name="Kapatral V."/>
            <person name="Bhattacharyya A."/>
            <person name="Reznik G."/>
            <person name="Mikhailova N."/>
            <person name="Lapidus A."/>
            <person name="Chu L."/>
            <person name="Mazur M."/>
            <person name="Goltsman E."/>
            <person name="Larsen N."/>
            <person name="D'Souza M."/>
            <person name="Walunas T."/>
            <person name="Grechkin Y."/>
            <person name="Pusch G."/>
            <person name="Haselkorn R."/>
            <person name="Fonstein M."/>
            <person name="Ehrlich S.D."/>
            <person name="Overbeek R."/>
            <person name="Kyrpides N.C."/>
        </authorList>
    </citation>
    <scope>NUCLEOTIDE SEQUENCE [LARGE SCALE GENOMIC DNA]</scope>
    <source>
        <strain>ATCC 14579 / DSM 31 / CCUG 7414 / JCM 2152 / NBRC 15305 / NCIMB 9373 / NCTC 2599 / NRRL B-3711</strain>
    </source>
</reference>
<accession>Q819W9</accession>
<protein>
    <recommendedName>
        <fullName evidence="1">Ribonuclease HII</fullName>
        <shortName evidence="1">RNase HII</shortName>
        <ecNumber evidence="1">3.1.26.4</ecNumber>
    </recommendedName>
</protein>
<proteinExistence type="inferred from homology"/>
<feature type="chain" id="PRO_0000111537" description="Ribonuclease HII">
    <location>
        <begin position="1"/>
        <end position="257"/>
    </location>
</feature>
<feature type="domain" description="RNase H type-2" evidence="2">
    <location>
        <begin position="72"/>
        <end position="257"/>
    </location>
</feature>
<feature type="binding site" evidence="1">
    <location>
        <position position="78"/>
    </location>
    <ligand>
        <name>a divalent metal cation</name>
        <dbReference type="ChEBI" id="CHEBI:60240"/>
    </ligand>
</feature>
<feature type="binding site" evidence="1">
    <location>
        <position position="79"/>
    </location>
    <ligand>
        <name>a divalent metal cation</name>
        <dbReference type="ChEBI" id="CHEBI:60240"/>
    </ligand>
</feature>
<feature type="binding site" evidence="1">
    <location>
        <position position="170"/>
    </location>
    <ligand>
        <name>a divalent metal cation</name>
        <dbReference type="ChEBI" id="CHEBI:60240"/>
    </ligand>
</feature>
<comment type="function">
    <text evidence="1">Endonuclease that specifically degrades the RNA of RNA-DNA hybrids.</text>
</comment>
<comment type="catalytic activity">
    <reaction evidence="1">
        <text>Endonucleolytic cleavage to 5'-phosphomonoester.</text>
        <dbReference type="EC" id="3.1.26.4"/>
    </reaction>
</comment>
<comment type="cofactor">
    <cofactor evidence="1">
        <name>Mn(2+)</name>
        <dbReference type="ChEBI" id="CHEBI:29035"/>
    </cofactor>
    <cofactor evidence="1">
        <name>Mg(2+)</name>
        <dbReference type="ChEBI" id="CHEBI:18420"/>
    </cofactor>
    <text evidence="1">Manganese or magnesium. Binds 1 divalent metal ion per monomer in the absence of substrate. May bind a second metal ion after substrate binding.</text>
</comment>
<comment type="subcellular location">
    <subcellularLocation>
        <location evidence="1">Cytoplasm</location>
    </subcellularLocation>
</comment>
<comment type="similarity">
    <text evidence="1">Belongs to the RNase HII family.</text>
</comment>
<name>RNH2_BACCR</name>
<sequence>MQTMTIKEAENVLKEIMNEEDDRFQLLMKDDRKGVQKLVLKWYKQKELEQKEKEKFFEMSKYENALREKGVTYIAGIDEVGRGPLAGPVVTAAVVLPEDFYIPGLNDSKKLSEAKRERFYDEIKVQAIAIGVGIVSPQVIDDINIYQATKQAMLDAVANLSCTPQHLLIDAMKLPTPIPQTSIIKGDAKSVSISAASIIAKVTRDRMMKELGGKYPEYGFEQHMGYGTKQHLEAIEVHGVLDEHRKSFAPIKDMIQK</sequence>